<name>IL10_CERAT</name>
<protein>
    <recommendedName>
        <fullName>Interleukin-10</fullName>
        <shortName>IL-10</shortName>
    </recommendedName>
    <alternativeName>
        <fullName>Cytokine synthesis inhibitory factor</fullName>
        <shortName>CSIF</shortName>
    </alternativeName>
</protein>
<sequence length="178" mass="20585">MHSSALLCCLVLLTGVRASPGQGTQSENSCTRFPGNLPHMLRDLRDVFSRVKTFFQMKDQLDNILLKESLLEDFKGYLGCQALSEMIQFYLEEVMPQAENHDPDIKEHVNSLGENLKTLRLRLRRCHRFLPCENKSKAVEQVKNAFSKLQEKGVYKAMSEFDIFINYIEAYMTMKIQN</sequence>
<proteinExistence type="evidence at transcript level"/>
<gene>
    <name type="primary">IL10</name>
</gene>
<organism>
    <name type="scientific">Cercocebus atys</name>
    <name type="common">Sooty mangabey</name>
    <name type="synonym">Cercocebus torquatus atys</name>
    <dbReference type="NCBI Taxonomy" id="9531"/>
    <lineage>
        <taxon>Eukaryota</taxon>
        <taxon>Metazoa</taxon>
        <taxon>Chordata</taxon>
        <taxon>Craniata</taxon>
        <taxon>Vertebrata</taxon>
        <taxon>Euteleostomi</taxon>
        <taxon>Mammalia</taxon>
        <taxon>Eutheria</taxon>
        <taxon>Euarchontoglires</taxon>
        <taxon>Primates</taxon>
        <taxon>Haplorrhini</taxon>
        <taxon>Catarrhini</taxon>
        <taxon>Cercopithecidae</taxon>
        <taxon>Cercopithecinae</taxon>
        <taxon>Cercocebus</taxon>
    </lineage>
</organism>
<comment type="function">
    <text evidence="2 3">Major immune regulatory cytokine that acts on many cells of the immune system where it has profound anti-inflammatory functions, limiting excessive tissue disruption caused by inflammation. Mechanistically, IL10 binds to its heterotetrameric receptor comprising IL10RA and IL10RB leading to JAK1 and STAT2-mediated phosphorylation of STAT3. In turn, STAT3 translocates to the nucleus where it drives expression of anti-inflammatory mediators. Targets antigen-presenting cells (APCs) such as macrophages and monocytes and inhibits their release of pro-inflammatory cytokines including granulocyte-macrophage colony-stimulating factor /GM-CSF, granulocyte colony-stimulating factor/G-CSF, IL-1 alpha, IL-1 beta, IL-6, IL-8 and TNF-alpha. Also interferes with antigen presentation by reducing the expression of MHC-class II and co-stimulatory molecules, thereby inhibiting their ability to induce T cell activation (By similarity). In addition, controls the inflammatory response of macrophages by reprogramming essential metabolic pathways including mTOR signaling (By similarity).</text>
</comment>
<comment type="subunit">
    <text evidence="3">Homodimer. Interacts with IL10RA and IL10RB.</text>
</comment>
<comment type="subcellular location">
    <subcellularLocation>
        <location evidence="3">Secreted</location>
    </subcellularLocation>
</comment>
<comment type="similarity">
    <text evidence="5">Belongs to the IL-10 family.</text>
</comment>
<accession>P46651</accession>
<keyword id="KW-0202">Cytokine</keyword>
<keyword id="KW-1015">Disulfide bond</keyword>
<keyword id="KW-0325">Glycoprotein</keyword>
<keyword id="KW-1185">Reference proteome</keyword>
<keyword id="KW-0964">Secreted</keyword>
<keyword id="KW-0732">Signal</keyword>
<reference key="1">
    <citation type="journal article" date="1995" name="J. Immunol.">
        <title>Comparative sequence analysis of cytokine genes from human and nonhuman primates.</title>
        <authorList>
            <person name="Villinger F.J."/>
            <person name="Brar S.S."/>
            <person name="Mayne A.E."/>
            <person name="Chikkala N."/>
            <person name="Ansari A.A."/>
        </authorList>
    </citation>
    <scope>NUCLEOTIDE SEQUENCE [MRNA]</scope>
    <source>
        <strain>FP1</strain>
    </source>
</reference>
<feature type="signal peptide" evidence="4">
    <location>
        <begin position="1"/>
        <end position="18"/>
    </location>
</feature>
<feature type="chain" id="PRO_0000015357" description="Interleukin-10">
    <location>
        <begin position="19"/>
        <end position="178"/>
    </location>
</feature>
<feature type="glycosylation site" description="N-linked (GlcNAc...) asparagine" evidence="4">
    <location>
        <position position="134"/>
    </location>
</feature>
<feature type="disulfide bond" evidence="1">
    <location>
        <begin position="30"/>
        <end position="126"/>
    </location>
</feature>
<feature type="disulfide bond" evidence="1">
    <location>
        <begin position="80"/>
        <end position="132"/>
    </location>
</feature>
<dbReference type="EMBL" id="L26030">
    <property type="protein sequence ID" value="AAA99970.1"/>
    <property type="molecule type" value="mRNA"/>
</dbReference>
<dbReference type="SMR" id="P46651"/>
<dbReference type="STRING" id="9531.ENSCATP00000026304"/>
<dbReference type="GlyCosmos" id="P46651">
    <property type="glycosylation" value="1 site, No reported glycans"/>
</dbReference>
<dbReference type="Proteomes" id="UP000233060">
    <property type="component" value="Unassembled WGS sequence"/>
</dbReference>
<dbReference type="GO" id="GO:0005615">
    <property type="term" value="C:extracellular space"/>
    <property type="evidence" value="ECO:0000250"/>
    <property type="project" value="UniProtKB"/>
</dbReference>
<dbReference type="GO" id="GO:0005125">
    <property type="term" value="F:cytokine activity"/>
    <property type="evidence" value="ECO:0007669"/>
    <property type="project" value="UniProtKB-KW"/>
</dbReference>
<dbReference type="GO" id="GO:0006955">
    <property type="term" value="P:immune response"/>
    <property type="evidence" value="ECO:0007669"/>
    <property type="project" value="InterPro"/>
</dbReference>
<dbReference type="GO" id="GO:0030889">
    <property type="term" value="P:negative regulation of B cell proliferation"/>
    <property type="evidence" value="ECO:0000250"/>
    <property type="project" value="UniProtKB"/>
</dbReference>
<dbReference type="GO" id="GO:0002719">
    <property type="term" value="P:negative regulation of cytokine production involved in immune response"/>
    <property type="evidence" value="ECO:0000250"/>
    <property type="project" value="UniProtKB"/>
</dbReference>
<dbReference type="GO" id="GO:0050728">
    <property type="term" value="P:negative regulation of inflammatory response"/>
    <property type="evidence" value="ECO:0000250"/>
    <property type="project" value="UniProtKB"/>
</dbReference>
<dbReference type="GO" id="GO:0032715">
    <property type="term" value="P:negative regulation of interleukin-6 production"/>
    <property type="evidence" value="ECO:0000250"/>
    <property type="project" value="UniProtKB"/>
</dbReference>
<dbReference type="GO" id="GO:0051045">
    <property type="term" value="P:negative regulation of membrane protein ectodomain proteolysis"/>
    <property type="evidence" value="ECO:0000250"/>
    <property type="project" value="UniProtKB"/>
</dbReference>
<dbReference type="GO" id="GO:0002904">
    <property type="term" value="P:positive regulation of B cell apoptotic process"/>
    <property type="evidence" value="ECO:0000250"/>
    <property type="project" value="UniProtKB"/>
</dbReference>
<dbReference type="GO" id="GO:0001819">
    <property type="term" value="P:positive regulation of cytokine production"/>
    <property type="evidence" value="ECO:0000250"/>
    <property type="project" value="UniProtKB"/>
</dbReference>
<dbReference type="GO" id="GO:0051091">
    <property type="term" value="P:positive regulation of DNA-binding transcription factor activity"/>
    <property type="evidence" value="ECO:0000250"/>
    <property type="project" value="UniProtKB"/>
</dbReference>
<dbReference type="GO" id="GO:0045893">
    <property type="term" value="P:positive regulation of DNA-templated transcription"/>
    <property type="evidence" value="ECO:0000250"/>
    <property type="project" value="UniProtKB"/>
</dbReference>
<dbReference type="GO" id="GO:0051384">
    <property type="term" value="P:response to glucocorticoid"/>
    <property type="evidence" value="ECO:0000250"/>
    <property type="project" value="UniProtKB"/>
</dbReference>
<dbReference type="GO" id="GO:0002237">
    <property type="term" value="P:response to molecule of bacterial origin"/>
    <property type="evidence" value="ECO:0000250"/>
    <property type="project" value="UniProtKB"/>
</dbReference>
<dbReference type="FunFam" id="1.20.1250.10:FF:000011">
    <property type="entry name" value="Interleukin-10"/>
    <property type="match status" value="1"/>
</dbReference>
<dbReference type="Gene3D" id="1.20.1250.10">
    <property type="match status" value="1"/>
</dbReference>
<dbReference type="InterPro" id="IPR009079">
    <property type="entry name" value="4_helix_cytokine-like_core"/>
</dbReference>
<dbReference type="InterPro" id="IPR000098">
    <property type="entry name" value="IL-10"/>
</dbReference>
<dbReference type="InterPro" id="IPR020443">
    <property type="entry name" value="IL-10/19/20/24/26"/>
</dbReference>
<dbReference type="InterPro" id="IPR020423">
    <property type="entry name" value="IL-10_CS"/>
</dbReference>
<dbReference type="PANTHER" id="PTHR48482:SF5">
    <property type="entry name" value="INTERLEUKIN-10"/>
    <property type="match status" value="1"/>
</dbReference>
<dbReference type="PANTHER" id="PTHR48482">
    <property type="entry name" value="INTERLEUKIN-19-RELATED"/>
    <property type="match status" value="1"/>
</dbReference>
<dbReference type="Pfam" id="PF00726">
    <property type="entry name" value="IL10"/>
    <property type="match status" value="1"/>
</dbReference>
<dbReference type="PRINTS" id="PR01294">
    <property type="entry name" value="INTRLEUKIN10"/>
</dbReference>
<dbReference type="SMART" id="SM00188">
    <property type="entry name" value="IL10"/>
    <property type="match status" value="1"/>
</dbReference>
<dbReference type="SUPFAM" id="SSF47266">
    <property type="entry name" value="4-helical cytokines"/>
    <property type="match status" value="1"/>
</dbReference>
<dbReference type="PROSITE" id="PS00520">
    <property type="entry name" value="INTERLEUKIN_10"/>
    <property type="match status" value="1"/>
</dbReference>
<evidence type="ECO:0000250" key="1"/>
<evidence type="ECO:0000250" key="2">
    <source>
        <dbReference type="UniProtKB" id="P18893"/>
    </source>
</evidence>
<evidence type="ECO:0000250" key="3">
    <source>
        <dbReference type="UniProtKB" id="P22301"/>
    </source>
</evidence>
<evidence type="ECO:0000255" key="4"/>
<evidence type="ECO:0000305" key="5"/>